<feature type="chain" id="PRO_0000248732" description="Proline--tRNA ligase">
    <location>
        <begin position="1"/>
        <end position="585"/>
    </location>
</feature>
<proteinExistence type="inferred from homology"/>
<accession>Q5YSB9</accession>
<name>SYP_NOCFA</name>
<sequence>MITRLSHLFLRTLRDDPADAEVPSHKLLVRAGYVRRVAPGVYSWLPLGLRVLRKVEDVVRAEMNAIGGQEISLPALLPRDPYETTNRWTEYGDSLFRLHDRKGADYLLGPTHEELFALTVKGEYNSYKDLPVTLYQIQTKYRDEERPRAGILRGREFVMKDSYSFDLDEDGLKASYNAHREAYQRIFDRLGVKYVIVAATSGAMGGSASEEFLADSPVGEDTYVICRESGYAANVEAVVTPAPEPQPIEGRPAAVVHDTPDTPTIASLVEWANAAGIAEQFGRPVTAADTLKNVMVKLRHPDGKTEIVGIGVPGDREVDDKRLGASVEPAEVELLTDADFAANPFLVKGYIGPKALQENGIRYLVDPRVGTGTAWITGADSPGKHVVGLIAGRDFTPDGTIEAAEVRDGDPSPDGRGTLEAARGIEIGHIFQLGYKYTDAFEVDVLGENGKPVRLIMGSYGIGVSRMVAVIAEQQHDEKGLRWPAAVAPFDVHVVVANKDEAARTGAEQVVAGLDAQGLDVLFDDRTASPGVKFKDAELLGMPWVVVIGRGWADGTVELRNRFTGEAENVPAAEAVATVVARIRG</sequence>
<organism>
    <name type="scientific">Nocardia farcinica (strain IFM 10152)</name>
    <dbReference type="NCBI Taxonomy" id="247156"/>
    <lineage>
        <taxon>Bacteria</taxon>
        <taxon>Bacillati</taxon>
        <taxon>Actinomycetota</taxon>
        <taxon>Actinomycetes</taxon>
        <taxon>Mycobacteriales</taxon>
        <taxon>Nocardiaceae</taxon>
        <taxon>Nocardia</taxon>
    </lineage>
</organism>
<keyword id="KW-0030">Aminoacyl-tRNA synthetase</keyword>
<keyword id="KW-0067">ATP-binding</keyword>
<keyword id="KW-0963">Cytoplasm</keyword>
<keyword id="KW-0436">Ligase</keyword>
<keyword id="KW-0547">Nucleotide-binding</keyword>
<keyword id="KW-0648">Protein biosynthesis</keyword>
<keyword id="KW-1185">Reference proteome</keyword>
<reference key="1">
    <citation type="journal article" date="2004" name="Proc. Natl. Acad. Sci. U.S.A.">
        <title>The complete genomic sequence of Nocardia farcinica IFM 10152.</title>
        <authorList>
            <person name="Ishikawa J."/>
            <person name="Yamashita A."/>
            <person name="Mikami Y."/>
            <person name="Hoshino Y."/>
            <person name="Kurita H."/>
            <person name="Hotta K."/>
            <person name="Shiba T."/>
            <person name="Hattori M."/>
        </authorList>
    </citation>
    <scope>NUCLEOTIDE SEQUENCE [LARGE SCALE GENOMIC DNA]</scope>
    <source>
        <strain>IFM 10152</strain>
    </source>
</reference>
<gene>
    <name evidence="1" type="primary">proS</name>
    <name type="ordered locus">NFA_40730</name>
</gene>
<evidence type="ECO:0000255" key="1">
    <source>
        <dbReference type="HAMAP-Rule" id="MF_01569"/>
    </source>
</evidence>
<dbReference type="EC" id="6.1.1.15" evidence="1"/>
<dbReference type="EMBL" id="AP006618">
    <property type="protein sequence ID" value="BAD58922.1"/>
    <property type="molecule type" value="Genomic_DNA"/>
</dbReference>
<dbReference type="RefSeq" id="WP_011210607.1">
    <property type="nucleotide sequence ID" value="NC_006361.1"/>
</dbReference>
<dbReference type="SMR" id="Q5YSB9"/>
<dbReference type="STRING" id="247156.NFA_40730"/>
<dbReference type="GeneID" id="61134716"/>
<dbReference type="KEGG" id="nfa:NFA_40730"/>
<dbReference type="eggNOG" id="COG0442">
    <property type="taxonomic scope" value="Bacteria"/>
</dbReference>
<dbReference type="HOGENOM" id="CLU_016739_0_0_11"/>
<dbReference type="OrthoDB" id="9809052at2"/>
<dbReference type="Proteomes" id="UP000006820">
    <property type="component" value="Chromosome"/>
</dbReference>
<dbReference type="GO" id="GO:0005829">
    <property type="term" value="C:cytosol"/>
    <property type="evidence" value="ECO:0007669"/>
    <property type="project" value="TreeGrafter"/>
</dbReference>
<dbReference type="GO" id="GO:0002161">
    <property type="term" value="F:aminoacyl-tRNA deacylase activity"/>
    <property type="evidence" value="ECO:0007669"/>
    <property type="project" value="InterPro"/>
</dbReference>
<dbReference type="GO" id="GO:0005524">
    <property type="term" value="F:ATP binding"/>
    <property type="evidence" value="ECO:0007669"/>
    <property type="project" value="UniProtKB-UniRule"/>
</dbReference>
<dbReference type="GO" id="GO:0004827">
    <property type="term" value="F:proline-tRNA ligase activity"/>
    <property type="evidence" value="ECO:0007669"/>
    <property type="project" value="UniProtKB-UniRule"/>
</dbReference>
<dbReference type="GO" id="GO:0006433">
    <property type="term" value="P:prolyl-tRNA aminoacylation"/>
    <property type="evidence" value="ECO:0007669"/>
    <property type="project" value="UniProtKB-UniRule"/>
</dbReference>
<dbReference type="CDD" id="cd00861">
    <property type="entry name" value="ProRS_anticodon_short"/>
    <property type="match status" value="1"/>
</dbReference>
<dbReference type="CDD" id="cd00779">
    <property type="entry name" value="ProRS_core_prok"/>
    <property type="match status" value="1"/>
</dbReference>
<dbReference type="FunFam" id="3.30.930.10:FF:000065">
    <property type="entry name" value="Proline--tRNA ligase"/>
    <property type="match status" value="1"/>
</dbReference>
<dbReference type="FunFam" id="3.30.930.10:FF:000070">
    <property type="entry name" value="Proline--tRNA ligase"/>
    <property type="match status" value="1"/>
</dbReference>
<dbReference type="Gene3D" id="3.40.50.800">
    <property type="entry name" value="Anticodon-binding domain"/>
    <property type="match status" value="1"/>
</dbReference>
<dbReference type="Gene3D" id="3.30.930.10">
    <property type="entry name" value="Bira Bifunctional Protein, Domain 2"/>
    <property type="match status" value="2"/>
</dbReference>
<dbReference type="Gene3D" id="3.90.960.10">
    <property type="entry name" value="YbaK/aminoacyl-tRNA synthetase-associated domain"/>
    <property type="match status" value="1"/>
</dbReference>
<dbReference type="HAMAP" id="MF_01569">
    <property type="entry name" value="Pro_tRNA_synth_type1"/>
    <property type="match status" value="1"/>
</dbReference>
<dbReference type="InterPro" id="IPR002314">
    <property type="entry name" value="aa-tRNA-synt_IIb"/>
</dbReference>
<dbReference type="InterPro" id="IPR006195">
    <property type="entry name" value="aa-tRNA-synth_II"/>
</dbReference>
<dbReference type="InterPro" id="IPR045864">
    <property type="entry name" value="aa-tRNA-synth_II/BPL/LPL"/>
</dbReference>
<dbReference type="InterPro" id="IPR004154">
    <property type="entry name" value="Anticodon-bd"/>
</dbReference>
<dbReference type="InterPro" id="IPR036621">
    <property type="entry name" value="Anticodon-bd_dom_sf"/>
</dbReference>
<dbReference type="InterPro" id="IPR002316">
    <property type="entry name" value="Pro-tRNA-ligase_IIa"/>
</dbReference>
<dbReference type="InterPro" id="IPR004500">
    <property type="entry name" value="Pro-tRNA-synth_IIa_bac-type"/>
</dbReference>
<dbReference type="InterPro" id="IPR023717">
    <property type="entry name" value="Pro-tRNA-Synthase_IIa_type1"/>
</dbReference>
<dbReference type="InterPro" id="IPR050062">
    <property type="entry name" value="Pro-tRNA_synthetase"/>
</dbReference>
<dbReference type="InterPro" id="IPR044140">
    <property type="entry name" value="ProRS_anticodon_short"/>
</dbReference>
<dbReference type="InterPro" id="IPR033730">
    <property type="entry name" value="ProRS_core_prok"/>
</dbReference>
<dbReference type="InterPro" id="IPR036754">
    <property type="entry name" value="YbaK/aa-tRNA-synt-asso_dom_sf"/>
</dbReference>
<dbReference type="InterPro" id="IPR007214">
    <property type="entry name" value="YbaK/aa-tRNA-synth-assoc-dom"/>
</dbReference>
<dbReference type="NCBIfam" id="NF006625">
    <property type="entry name" value="PRK09194.1"/>
    <property type="match status" value="1"/>
</dbReference>
<dbReference type="NCBIfam" id="TIGR00409">
    <property type="entry name" value="proS_fam_II"/>
    <property type="match status" value="1"/>
</dbReference>
<dbReference type="PANTHER" id="PTHR42753">
    <property type="entry name" value="MITOCHONDRIAL RIBOSOME PROTEIN L39/PROLYL-TRNA LIGASE FAMILY MEMBER"/>
    <property type="match status" value="1"/>
</dbReference>
<dbReference type="PANTHER" id="PTHR42753:SF2">
    <property type="entry name" value="PROLINE--TRNA LIGASE"/>
    <property type="match status" value="1"/>
</dbReference>
<dbReference type="Pfam" id="PF03129">
    <property type="entry name" value="HGTP_anticodon"/>
    <property type="match status" value="1"/>
</dbReference>
<dbReference type="Pfam" id="PF00587">
    <property type="entry name" value="tRNA-synt_2b"/>
    <property type="match status" value="1"/>
</dbReference>
<dbReference type="Pfam" id="PF04073">
    <property type="entry name" value="tRNA_edit"/>
    <property type="match status" value="1"/>
</dbReference>
<dbReference type="PRINTS" id="PR01046">
    <property type="entry name" value="TRNASYNTHPRO"/>
</dbReference>
<dbReference type="SUPFAM" id="SSF52954">
    <property type="entry name" value="Class II aaRS ABD-related"/>
    <property type="match status" value="1"/>
</dbReference>
<dbReference type="SUPFAM" id="SSF55681">
    <property type="entry name" value="Class II aaRS and biotin synthetases"/>
    <property type="match status" value="1"/>
</dbReference>
<dbReference type="SUPFAM" id="SSF55826">
    <property type="entry name" value="YbaK/ProRS associated domain"/>
    <property type="match status" value="1"/>
</dbReference>
<dbReference type="PROSITE" id="PS50862">
    <property type="entry name" value="AA_TRNA_LIGASE_II"/>
    <property type="match status" value="1"/>
</dbReference>
<comment type="function">
    <text evidence="1">Catalyzes the attachment of proline to tRNA(Pro) in a two-step reaction: proline is first activated by ATP to form Pro-AMP and then transferred to the acceptor end of tRNA(Pro). As ProRS can inadvertently accommodate and process non-cognate amino acids such as alanine and cysteine, to avoid such errors it has two additional distinct editing activities against alanine. One activity is designated as 'pretransfer' editing and involves the tRNA(Pro)-independent hydrolysis of activated Ala-AMP. The other activity is designated 'posttransfer' editing and involves deacylation of mischarged Ala-tRNA(Pro). The misacylated Cys-tRNA(Pro) is not edited by ProRS.</text>
</comment>
<comment type="catalytic activity">
    <reaction evidence="1">
        <text>tRNA(Pro) + L-proline + ATP = L-prolyl-tRNA(Pro) + AMP + diphosphate</text>
        <dbReference type="Rhea" id="RHEA:14305"/>
        <dbReference type="Rhea" id="RHEA-COMP:9700"/>
        <dbReference type="Rhea" id="RHEA-COMP:9702"/>
        <dbReference type="ChEBI" id="CHEBI:30616"/>
        <dbReference type="ChEBI" id="CHEBI:33019"/>
        <dbReference type="ChEBI" id="CHEBI:60039"/>
        <dbReference type="ChEBI" id="CHEBI:78442"/>
        <dbReference type="ChEBI" id="CHEBI:78532"/>
        <dbReference type="ChEBI" id="CHEBI:456215"/>
        <dbReference type="EC" id="6.1.1.15"/>
    </reaction>
</comment>
<comment type="subunit">
    <text evidence="1">Homodimer.</text>
</comment>
<comment type="subcellular location">
    <subcellularLocation>
        <location evidence="1">Cytoplasm</location>
    </subcellularLocation>
</comment>
<comment type="domain">
    <text evidence="1">Consists of three domains: the N-terminal catalytic domain, the editing domain and the C-terminal anticodon-binding domain.</text>
</comment>
<comment type="similarity">
    <text evidence="1">Belongs to the class-II aminoacyl-tRNA synthetase family. ProS type 1 subfamily.</text>
</comment>
<protein>
    <recommendedName>
        <fullName evidence="1">Proline--tRNA ligase</fullName>
        <ecNumber evidence="1">6.1.1.15</ecNumber>
    </recommendedName>
    <alternativeName>
        <fullName evidence="1">Prolyl-tRNA synthetase</fullName>
        <shortName evidence="1">ProRS</shortName>
    </alternativeName>
</protein>